<proteinExistence type="inferred from homology"/>
<comment type="function">
    <text evidence="1">Catalyzes the NADPH-dependent reduction of L-glutamate 5-phosphate into L-glutamate 5-semialdehyde and phosphate. The product spontaneously undergoes cyclization to form 1-pyrroline-5-carboxylate.</text>
</comment>
<comment type="catalytic activity">
    <reaction evidence="1">
        <text>L-glutamate 5-semialdehyde + phosphate + NADP(+) = L-glutamyl 5-phosphate + NADPH + H(+)</text>
        <dbReference type="Rhea" id="RHEA:19541"/>
        <dbReference type="ChEBI" id="CHEBI:15378"/>
        <dbReference type="ChEBI" id="CHEBI:43474"/>
        <dbReference type="ChEBI" id="CHEBI:57783"/>
        <dbReference type="ChEBI" id="CHEBI:58066"/>
        <dbReference type="ChEBI" id="CHEBI:58274"/>
        <dbReference type="ChEBI" id="CHEBI:58349"/>
        <dbReference type="EC" id="1.2.1.41"/>
    </reaction>
</comment>
<comment type="pathway">
    <text evidence="1">Amino-acid biosynthesis; L-proline biosynthesis; L-glutamate 5-semialdehyde from L-glutamate: step 2/2.</text>
</comment>
<comment type="subcellular location">
    <subcellularLocation>
        <location evidence="1">Cytoplasm</location>
    </subcellularLocation>
</comment>
<comment type="similarity">
    <text evidence="1">Belongs to the gamma-glutamyl phosphate reductase family.</text>
</comment>
<reference key="1">
    <citation type="journal article" date="2009" name="Genome Biol.">
        <title>Genomic and genetic analyses of diversity and plant interactions of Pseudomonas fluorescens.</title>
        <authorList>
            <person name="Silby M.W."/>
            <person name="Cerdeno-Tarraga A.M."/>
            <person name="Vernikos G.S."/>
            <person name="Giddens S.R."/>
            <person name="Jackson R.W."/>
            <person name="Preston G.M."/>
            <person name="Zhang X.-X."/>
            <person name="Moon C.D."/>
            <person name="Gehrig S.M."/>
            <person name="Godfrey S.A.C."/>
            <person name="Knight C.G."/>
            <person name="Malone J.G."/>
            <person name="Robinson Z."/>
            <person name="Spiers A.J."/>
            <person name="Harris S."/>
            <person name="Challis G.L."/>
            <person name="Yaxley A.M."/>
            <person name="Harris D."/>
            <person name="Seeger K."/>
            <person name="Murphy L."/>
            <person name="Rutter S."/>
            <person name="Squares R."/>
            <person name="Quail M.A."/>
            <person name="Saunders E."/>
            <person name="Mavromatis K."/>
            <person name="Brettin T.S."/>
            <person name="Bentley S.D."/>
            <person name="Hothersall J."/>
            <person name="Stephens E."/>
            <person name="Thomas C.M."/>
            <person name="Parkhill J."/>
            <person name="Levy S.B."/>
            <person name="Rainey P.B."/>
            <person name="Thomson N.R."/>
        </authorList>
    </citation>
    <scope>NUCLEOTIDE SEQUENCE [LARGE SCALE GENOMIC DNA]</scope>
    <source>
        <strain>SBW25</strain>
    </source>
</reference>
<name>PROA_PSEFS</name>
<feature type="chain" id="PRO_1000206002" description="Gamma-glutamyl phosphate reductase">
    <location>
        <begin position="1"/>
        <end position="421"/>
    </location>
</feature>
<gene>
    <name evidence="1" type="primary">proA</name>
    <name type="ordered locus">PFLU_5427</name>
</gene>
<accession>C3K2M9</accession>
<organism>
    <name type="scientific">Pseudomonas fluorescens (strain SBW25)</name>
    <dbReference type="NCBI Taxonomy" id="216595"/>
    <lineage>
        <taxon>Bacteria</taxon>
        <taxon>Pseudomonadati</taxon>
        <taxon>Pseudomonadota</taxon>
        <taxon>Gammaproteobacteria</taxon>
        <taxon>Pseudomonadales</taxon>
        <taxon>Pseudomonadaceae</taxon>
        <taxon>Pseudomonas</taxon>
    </lineage>
</organism>
<dbReference type="EC" id="1.2.1.41" evidence="1"/>
<dbReference type="EMBL" id="AM181176">
    <property type="protein sequence ID" value="CAY52606.1"/>
    <property type="molecule type" value="Genomic_DNA"/>
</dbReference>
<dbReference type="RefSeq" id="WP_015886068.1">
    <property type="nucleotide sequence ID" value="NC_012660.1"/>
</dbReference>
<dbReference type="SMR" id="C3K2M9"/>
<dbReference type="STRING" id="294.SRM1_05049"/>
<dbReference type="eggNOG" id="COG0014">
    <property type="taxonomic scope" value="Bacteria"/>
</dbReference>
<dbReference type="HOGENOM" id="CLU_030231_0_0_6"/>
<dbReference type="OrthoDB" id="9809970at2"/>
<dbReference type="UniPathway" id="UPA00098">
    <property type="reaction ID" value="UER00360"/>
</dbReference>
<dbReference type="GO" id="GO:0005737">
    <property type="term" value="C:cytoplasm"/>
    <property type="evidence" value="ECO:0007669"/>
    <property type="project" value="UniProtKB-SubCell"/>
</dbReference>
<dbReference type="GO" id="GO:0004350">
    <property type="term" value="F:glutamate-5-semialdehyde dehydrogenase activity"/>
    <property type="evidence" value="ECO:0007669"/>
    <property type="project" value="UniProtKB-UniRule"/>
</dbReference>
<dbReference type="GO" id="GO:0050661">
    <property type="term" value="F:NADP binding"/>
    <property type="evidence" value="ECO:0007669"/>
    <property type="project" value="InterPro"/>
</dbReference>
<dbReference type="GO" id="GO:0055129">
    <property type="term" value="P:L-proline biosynthetic process"/>
    <property type="evidence" value="ECO:0007669"/>
    <property type="project" value="UniProtKB-UniRule"/>
</dbReference>
<dbReference type="CDD" id="cd07079">
    <property type="entry name" value="ALDH_F18-19_ProA-GPR"/>
    <property type="match status" value="1"/>
</dbReference>
<dbReference type="FunFam" id="3.40.309.10:FF:000006">
    <property type="entry name" value="Gamma-glutamyl phosphate reductase"/>
    <property type="match status" value="1"/>
</dbReference>
<dbReference type="Gene3D" id="3.40.605.10">
    <property type="entry name" value="Aldehyde Dehydrogenase, Chain A, domain 1"/>
    <property type="match status" value="1"/>
</dbReference>
<dbReference type="Gene3D" id="3.40.309.10">
    <property type="entry name" value="Aldehyde Dehydrogenase, Chain A, domain 2"/>
    <property type="match status" value="1"/>
</dbReference>
<dbReference type="HAMAP" id="MF_00412">
    <property type="entry name" value="ProA"/>
    <property type="match status" value="1"/>
</dbReference>
<dbReference type="InterPro" id="IPR016161">
    <property type="entry name" value="Ald_DH/histidinol_DH"/>
</dbReference>
<dbReference type="InterPro" id="IPR016163">
    <property type="entry name" value="Ald_DH_C"/>
</dbReference>
<dbReference type="InterPro" id="IPR016162">
    <property type="entry name" value="Ald_DH_N"/>
</dbReference>
<dbReference type="InterPro" id="IPR015590">
    <property type="entry name" value="Aldehyde_DH_dom"/>
</dbReference>
<dbReference type="InterPro" id="IPR020593">
    <property type="entry name" value="G-glutamylP_reductase_CS"/>
</dbReference>
<dbReference type="InterPro" id="IPR012134">
    <property type="entry name" value="Glu-5-SA_DH"/>
</dbReference>
<dbReference type="InterPro" id="IPR000965">
    <property type="entry name" value="GPR_dom"/>
</dbReference>
<dbReference type="NCBIfam" id="NF001221">
    <property type="entry name" value="PRK00197.1"/>
    <property type="match status" value="1"/>
</dbReference>
<dbReference type="NCBIfam" id="TIGR00407">
    <property type="entry name" value="proA"/>
    <property type="match status" value="1"/>
</dbReference>
<dbReference type="PANTHER" id="PTHR11063:SF8">
    <property type="entry name" value="DELTA-1-PYRROLINE-5-CARBOXYLATE SYNTHASE"/>
    <property type="match status" value="1"/>
</dbReference>
<dbReference type="PANTHER" id="PTHR11063">
    <property type="entry name" value="GLUTAMATE SEMIALDEHYDE DEHYDROGENASE"/>
    <property type="match status" value="1"/>
</dbReference>
<dbReference type="Pfam" id="PF00171">
    <property type="entry name" value="Aldedh"/>
    <property type="match status" value="2"/>
</dbReference>
<dbReference type="PIRSF" id="PIRSF000151">
    <property type="entry name" value="GPR"/>
    <property type="match status" value="1"/>
</dbReference>
<dbReference type="SUPFAM" id="SSF53720">
    <property type="entry name" value="ALDH-like"/>
    <property type="match status" value="1"/>
</dbReference>
<dbReference type="PROSITE" id="PS01223">
    <property type="entry name" value="PROA"/>
    <property type="match status" value="1"/>
</dbReference>
<sequence length="421" mass="45408">MTESVLDYMTRLGRAARQASRLIARASTAQKNRALLAAADALDASRSELTAANEQDLANGRANGLEPALLDRLALTPARIDDMIEGLRQVAKLPDPIGEIRDMRYLPSGIQVGKMRVPLGVIGIIYESRPNVTIDAASLCLKSGNATILRGGSEAINSNRAIAACIQQGLAVAELPAEVVQVVETTDRAAVGALITMPEFVDVIVPRGGKSLIERVSRDAKVPVIKHLDGVCHVFIDIAADIDKAIRIADNAKTHRYAPCNTMETLLVHVGIADRVLPPLAAIYRDKGVELRGCERTRALLGADVIEATELDWYTEYTAPILSIKIVDDLDEAIEHINTYGSKHTDAIVSEHFSDARRFLNEVDSASVMINASTRFADGFEYGLGAEIGISTDKLHARGPVGLEGLTSEKYVVFGDGHVRT</sequence>
<protein>
    <recommendedName>
        <fullName evidence="1">Gamma-glutamyl phosphate reductase</fullName>
        <shortName evidence="1">GPR</shortName>
        <ecNumber evidence="1">1.2.1.41</ecNumber>
    </recommendedName>
    <alternativeName>
        <fullName evidence="1">Glutamate-5-semialdehyde dehydrogenase</fullName>
    </alternativeName>
    <alternativeName>
        <fullName evidence="1">Glutamyl-gamma-semialdehyde dehydrogenase</fullName>
        <shortName evidence="1">GSA dehydrogenase</shortName>
    </alternativeName>
</protein>
<keyword id="KW-0028">Amino-acid biosynthesis</keyword>
<keyword id="KW-0963">Cytoplasm</keyword>
<keyword id="KW-0521">NADP</keyword>
<keyword id="KW-0560">Oxidoreductase</keyword>
<keyword id="KW-0641">Proline biosynthesis</keyword>
<evidence type="ECO:0000255" key="1">
    <source>
        <dbReference type="HAMAP-Rule" id="MF_00412"/>
    </source>
</evidence>